<comment type="cofactor">
    <cofactor evidence="2">
        <name>Zn(2+)</name>
        <dbReference type="ChEBI" id="CHEBI:29105"/>
    </cofactor>
    <text evidence="2">Binds 1 zinc ion.</text>
</comment>
<comment type="subcellular location">
    <subcellularLocation>
        <location evidence="2">Cytoplasm</location>
    </subcellularLocation>
</comment>
<comment type="similarity">
    <text evidence="2">Belongs to the SprT family.</text>
</comment>
<evidence type="ECO:0000255" key="1"/>
<evidence type="ECO:0000305" key="2"/>
<organism>
    <name type="scientific">Pasteurella multocida (strain Pm70)</name>
    <dbReference type="NCBI Taxonomy" id="272843"/>
    <lineage>
        <taxon>Bacteria</taxon>
        <taxon>Pseudomonadati</taxon>
        <taxon>Pseudomonadota</taxon>
        <taxon>Gammaproteobacteria</taxon>
        <taxon>Pasteurellales</taxon>
        <taxon>Pasteurellaceae</taxon>
        <taxon>Pasteurella</taxon>
    </lineage>
</organism>
<name>SPRT_PASMU</name>
<sequence length="165" mass="19378">MQPQTQLRHLNRQVQRKLTQCLQLASGYFNRTFSMPTVHYNVRGMKAGVAYLQQNEIRLNPILLLENSAAFIQQVVPHELAHLIVYQVFGRVKPHGEEWQSVMQDVFHLTPEVCHQFDVSSVTKQRYPYQCQCQTHYLSVRRHHNIQSGKAIYFCKKCKVELILQ</sequence>
<dbReference type="EMBL" id="AE004439">
    <property type="protein sequence ID" value="AAK03110.1"/>
    <property type="molecule type" value="Genomic_DNA"/>
</dbReference>
<dbReference type="STRING" id="272843.PM1026"/>
<dbReference type="EnsemblBacteria" id="AAK03110">
    <property type="protein sequence ID" value="AAK03110"/>
    <property type="gene ID" value="PM1026"/>
</dbReference>
<dbReference type="KEGG" id="pmu:PM1026"/>
<dbReference type="HOGENOM" id="CLU_113336_0_1_6"/>
<dbReference type="Proteomes" id="UP000000809">
    <property type="component" value="Chromosome"/>
</dbReference>
<dbReference type="GO" id="GO:0005737">
    <property type="term" value="C:cytoplasm"/>
    <property type="evidence" value="ECO:0007669"/>
    <property type="project" value="UniProtKB-SubCell"/>
</dbReference>
<dbReference type="GO" id="GO:0008270">
    <property type="term" value="F:zinc ion binding"/>
    <property type="evidence" value="ECO:0007669"/>
    <property type="project" value="UniProtKB-UniRule"/>
</dbReference>
<dbReference type="GO" id="GO:0006950">
    <property type="term" value="P:response to stress"/>
    <property type="evidence" value="ECO:0007669"/>
    <property type="project" value="UniProtKB-ARBA"/>
</dbReference>
<dbReference type="Gene3D" id="3.30.2010.10">
    <property type="entry name" value="Metalloproteases ('zincins'), catalytic domain"/>
    <property type="match status" value="1"/>
</dbReference>
<dbReference type="HAMAP" id="MF_00746">
    <property type="entry name" value="SprT"/>
    <property type="match status" value="1"/>
</dbReference>
<dbReference type="InterPro" id="IPR006640">
    <property type="entry name" value="SprT-like_domain"/>
</dbReference>
<dbReference type="InterPro" id="IPR023483">
    <property type="entry name" value="Uncharacterised_SprT"/>
</dbReference>
<dbReference type="NCBIfam" id="NF003421">
    <property type="entry name" value="PRK04860.1"/>
    <property type="match status" value="1"/>
</dbReference>
<dbReference type="PANTHER" id="PTHR38773">
    <property type="entry name" value="PROTEIN SPRT"/>
    <property type="match status" value="1"/>
</dbReference>
<dbReference type="PANTHER" id="PTHR38773:SF1">
    <property type="entry name" value="PROTEIN SPRT"/>
    <property type="match status" value="1"/>
</dbReference>
<dbReference type="Pfam" id="PF10263">
    <property type="entry name" value="SprT-like"/>
    <property type="match status" value="1"/>
</dbReference>
<dbReference type="SMART" id="SM00731">
    <property type="entry name" value="SprT"/>
    <property type="match status" value="1"/>
</dbReference>
<dbReference type="PROSITE" id="PS00142">
    <property type="entry name" value="ZINC_PROTEASE"/>
    <property type="match status" value="1"/>
</dbReference>
<feature type="chain" id="PRO_0000213271" description="Protein SprT">
    <location>
        <begin position="1"/>
        <end position="165"/>
    </location>
</feature>
<feature type="domain" description="SprT-like">
    <location>
        <begin position="26"/>
        <end position="162"/>
    </location>
</feature>
<feature type="active site" evidence="1">
    <location>
        <position position="79"/>
    </location>
</feature>
<feature type="binding site" evidence="1">
    <location>
        <position position="78"/>
    </location>
    <ligand>
        <name>Zn(2+)</name>
        <dbReference type="ChEBI" id="CHEBI:29105"/>
    </ligand>
</feature>
<feature type="binding site" evidence="1">
    <location>
        <position position="82"/>
    </location>
    <ligand>
        <name>Zn(2+)</name>
        <dbReference type="ChEBI" id="CHEBI:29105"/>
    </ligand>
</feature>
<accession>Q9CM18</accession>
<keyword id="KW-0963">Cytoplasm</keyword>
<keyword id="KW-0479">Metal-binding</keyword>
<keyword id="KW-1185">Reference proteome</keyword>
<keyword id="KW-0862">Zinc</keyword>
<proteinExistence type="inferred from homology"/>
<reference key="1">
    <citation type="journal article" date="2001" name="Proc. Natl. Acad. Sci. U.S.A.">
        <title>Complete genomic sequence of Pasteurella multocida Pm70.</title>
        <authorList>
            <person name="May B.J."/>
            <person name="Zhang Q."/>
            <person name="Li L.L."/>
            <person name="Paustian M.L."/>
            <person name="Whittam T.S."/>
            <person name="Kapur V."/>
        </authorList>
    </citation>
    <scope>NUCLEOTIDE SEQUENCE [LARGE SCALE GENOMIC DNA]</scope>
    <source>
        <strain>Pm70</strain>
    </source>
</reference>
<gene>
    <name type="primary">sprT</name>
    <name type="ordered locus">PM1026</name>
</gene>
<protein>
    <recommendedName>
        <fullName>Protein SprT</fullName>
    </recommendedName>
</protein>